<reference key="1">
    <citation type="journal article" date="2007" name="Genome Biol.">
        <title>Comparison of Francisella tularensis genomes reveals evolutionary events associated with the emergence of human pathogenic strains.</title>
        <authorList>
            <person name="Rohmer L."/>
            <person name="Fong C."/>
            <person name="Abmayr S."/>
            <person name="Wasnick M."/>
            <person name="Larson Freeman T.J."/>
            <person name="Radey M."/>
            <person name="Guina T."/>
            <person name="Svensson K."/>
            <person name="Hayden H.S."/>
            <person name="Jacobs M."/>
            <person name="Gallagher L.A."/>
            <person name="Manoil C."/>
            <person name="Ernst R.K."/>
            <person name="Drees B."/>
            <person name="Buckley D."/>
            <person name="Haugen E."/>
            <person name="Bovee D."/>
            <person name="Zhou Y."/>
            <person name="Chang J."/>
            <person name="Levy R."/>
            <person name="Lim R."/>
            <person name="Gillett W."/>
            <person name="Guenthener D."/>
            <person name="Kang A."/>
            <person name="Shaffer S.A."/>
            <person name="Taylor G."/>
            <person name="Chen J."/>
            <person name="Gallis B."/>
            <person name="D'Argenio D.A."/>
            <person name="Forsman M."/>
            <person name="Olson M.V."/>
            <person name="Goodlett D.R."/>
            <person name="Kaul R."/>
            <person name="Miller S.I."/>
            <person name="Brittnacher M.J."/>
        </authorList>
    </citation>
    <scope>NUCLEOTIDE SEQUENCE [LARGE SCALE GENOMIC DNA]</scope>
    <source>
        <strain>U112</strain>
    </source>
</reference>
<accession>A0Q415</accession>
<organism>
    <name type="scientific">Francisella tularensis subsp. novicida (strain U112)</name>
    <dbReference type="NCBI Taxonomy" id="401614"/>
    <lineage>
        <taxon>Bacteria</taxon>
        <taxon>Pseudomonadati</taxon>
        <taxon>Pseudomonadota</taxon>
        <taxon>Gammaproteobacteria</taxon>
        <taxon>Thiotrichales</taxon>
        <taxon>Francisellaceae</taxon>
        <taxon>Francisella</taxon>
    </lineage>
</organism>
<keyword id="KW-0963">Cytoplasm</keyword>
<keyword id="KW-0251">Elongation factor</keyword>
<keyword id="KW-0379">Hydroxylation</keyword>
<keyword id="KW-0648">Protein biosynthesis</keyword>
<sequence>MASYSTNEFKGGLKVLIDGNPMVIVENEFVKPGKGQAFNRVKLKNLLNDRVVEKTFKSGESVEAADVEELTTVYSYFDGDSYVFMHPETFEQYMVSEEALGETKKWLKDQDEYQVILFNGQPISIIAPNFVNLEIIETDPGLKGDTAGTGGKPATLSTGAVVRVPLFVQTGEIIKVDTRTSTYVSRVKD</sequence>
<name>EFP_FRATN</name>
<protein>
    <recommendedName>
        <fullName evidence="1">Elongation factor P</fullName>
        <shortName evidence="1">EF-P</shortName>
    </recommendedName>
</protein>
<gene>
    <name evidence="1" type="primary">efp</name>
    <name type="ordered locus">FTN_0069</name>
</gene>
<comment type="function">
    <text evidence="1">Involved in peptide bond synthesis. Alleviates ribosome stalling that occurs when 3 or more consecutive Pro residues or the sequence PPG is present in a protein, possibly by augmenting the peptidyl transferase activity of the ribosome. Modification of Lys-34 is required for alleviation.</text>
</comment>
<comment type="pathway">
    <text evidence="1">Protein biosynthesis; polypeptide chain elongation.</text>
</comment>
<comment type="subcellular location">
    <subcellularLocation>
        <location evidence="1">Cytoplasm</location>
    </subcellularLocation>
</comment>
<comment type="PTM">
    <text evidence="1">May be beta-lysylated on the epsilon-amino group of Lys-34 by the combined action of EpmA and EpmB, and then hydroxylated on the C5 position of the same residue by EpmC (if this protein is present). Lysylation is critical for the stimulatory effect of EF-P on peptide-bond formation. The lysylation moiety may extend toward the peptidyltransferase center and stabilize the terminal 3-CCA end of the tRNA. Hydroxylation of the C5 position on Lys-34 may allow additional potential stabilizing hydrogen-bond interactions with the P-tRNA.</text>
</comment>
<comment type="similarity">
    <text evidence="1">Belongs to the elongation factor P family.</text>
</comment>
<evidence type="ECO:0000255" key="1">
    <source>
        <dbReference type="HAMAP-Rule" id="MF_00141"/>
    </source>
</evidence>
<dbReference type="EMBL" id="CP000439">
    <property type="protein sequence ID" value="ABK88980.1"/>
    <property type="molecule type" value="Genomic_DNA"/>
</dbReference>
<dbReference type="RefSeq" id="WP_003032698.1">
    <property type="nucleotide sequence ID" value="NZ_CP009633.1"/>
</dbReference>
<dbReference type="SMR" id="A0Q415"/>
<dbReference type="GeneID" id="75264432"/>
<dbReference type="KEGG" id="ftn:FTN_0069"/>
<dbReference type="KEGG" id="ftx:AW25_131"/>
<dbReference type="BioCyc" id="FTUL401614:G1G75-72-MONOMER"/>
<dbReference type="UniPathway" id="UPA00345"/>
<dbReference type="Proteomes" id="UP000000762">
    <property type="component" value="Chromosome"/>
</dbReference>
<dbReference type="GO" id="GO:0005737">
    <property type="term" value="C:cytoplasm"/>
    <property type="evidence" value="ECO:0007669"/>
    <property type="project" value="UniProtKB-SubCell"/>
</dbReference>
<dbReference type="GO" id="GO:0003746">
    <property type="term" value="F:translation elongation factor activity"/>
    <property type="evidence" value="ECO:0007669"/>
    <property type="project" value="UniProtKB-UniRule"/>
</dbReference>
<dbReference type="GO" id="GO:0043043">
    <property type="term" value="P:peptide biosynthetic process"/>
    <property type="evidence" value="ECO:0007669"/>
    <property type="project" value="InterPro"/>
</dbReference>
<dbReference type="CDD" id="cd04470">
    <property type="entry name" value="S1_EF-P_repeat_1"/>
    <property type="match status" value="1"/>
</dbReference>
<dbReference type="CDD" id="cd05794">
    <property type="entry name" value="S1_EF-P_repeat_2"/>
    <property type="match status" value="1"/>
</dbReference>
<dbReference type="FunFam" id="2.30.30.30:FF:000003">
    <property type="entry name" value="Elongation factor P"/>
    <property type="match status" value="1"/>
</dbReference>
<dbReference type="FunFam" id="2.40.50.140:FF:000004">
    <property type="entry name" value="Elongation factor P"/>
    <property type="match status" value="1"/>
</dbReference>
<dbReference type="FunFam" id="2.40.50.140:FF:000009">
    <property type="entry name" value="Elongation factor P"/>
    <property type="match status" value="1"/>
</dbReference>
<dbReference type="Gene3D" id="2.30.30.30">
    <property type="match status" value="1"/>
</dbReference>
<dbReference type="Gene3D" id="2.40.50.140">
    <property type="entry name" value="Nucleic acid-binding proteins"/>
    <property type="match status" value="2"/>
</dbReference>
<dbReference type="HAMAP" id="MF_00141">
    <property type="entry name" value="EF_P"/>
    <property type="match status" value="1"/>
</dbReference>
<dbReference type="InterPro" id="IPR015365">
    <property type="entry name" value="Elong-fact-P_C"/>
</dbReference>
<dbReference type="InterPro" id="IPR012340">
    <property type="entry name" value="NA-bd_OB-fold"/>
</dbReference>
<dbReference type="InterPro" id="IPR014722">
    <property type="entry name" value="Rib_uL2_dom2"/>
</dbReference>
<dbReference type="InterPro" id="IPR020599">
    <property type="entry name" value="Transl_elong_fac_P/YeiP"/>
</dbReference>
<dbReference type="InterPro" id="IPR013185">
    <property type="entry name" value="Transl_elong_KOW-like"/>
</dbReference>
<dbReference type="InterPro" id="IPR001059">
    <property type="entry name" value="Transl_elong_P/YeiP_cen"/>
</dbReference>
<dbReference type="InterPro" id="IPR013852">
    <property type="entry name" value="Transl_elong_P/YeiP_CS"/>
</dbReference>
<dbReference type="InterPro" id="IPR011768">
    <property type="entry name" value="Transl_elongation_fac_P"/>
</dbReference>
<dbReference type="InterPro" id="IPR008991">
    <property type="entry name" value="Translation_prot_SH3-like_sf"/>
</dbReference>
<dbReference type="NCBIfam" id="TIGR00038">
    <property type="entry name" value="efp"/>
    <property type="match status" value="1"/>
</dbReference>
<dbReference type="NCBIfam" id="NF001810">
    <property type="entry name" value="PRK00529.1"/>
    <property type="match status" value="1"/>
</dbReference>
<dbReference type="PANTHER" id="PTHR30053">
    <property type="entry name" value="ELONGATION FACTOR P"/>
    <property type="match status" value="1"/>
</dbReference>
<dbReference type="PANTHER" id="PTHR30053:SF12">
    <property type="entry name" value="ELONGATION FACTOR P (EF-P) FAMILY PROTEIN"/>
    <property type="match status" value="1"/>
</dbReference>
<dbReference type="Pfam" id="PF01132">
    <property type="entry name" value="EFP"/>
    <property type="match status" value="1"/>
</dbReference>
<dbReference type="Pfam" id="PF08207">
    <property type="entry name" value="EFP_N"/>
    <property type="match status" value="1"/>
</dbReference>
<dbReference type="Pfam" id="PF09285">
    <property type="entry name" value="Elong-fact-P_C"/>
    <property type="match status" value="1"/>
</dbReference>
<dbReference type="PIRSF" id="PIRSF005901">
    <property type="entry name" value="EF-P"/>
    <property type="match status" value="1"/>
</dbReference>
<dbReference type="SMART" id="SM01185">
    <property type="entry name" value="EFP"/>
    <property type="match status" value="1"/>
</dbReference>
<dbReference type="SMART" id="SM00841">
    <property type="entry name" value="Elong-fact-P_C"/>
    <property type="match status" value="1"/>
</dbReference>
<dbReference type="SUPFAM" id="SSF50249">
    <property type="entry name" value="Nucleic acid-binding proteins"/>
    <property type="match status" value="2"/>
</dbReference>
<dbReference type="SUPFAM" id="SSF50104">
    <property type="entry name" value="Translation proteins SH3-like domain"/>
    <property type="match status" value="1"/>
</dbReference>
<dbReference type="PROSITE" id="PS01275">
    <property type="entry name" value="EFP"/>
    <property type="match status" value="1"/>
</dbReference>
<proteinExistence type="inferred from homology"/>
<feature type="chain" id="PRO_1000010748" description="Elongation factor P">
    <location>
        <begin position="1"/>
        <end position="189"/>
    </location>
</feature>
<feature type="modified residue" description="N6-(3,6-diaminohexanoyl)-5-hydroxylysine" evidence="1">
    <location>
        <position position="34"/>
    </location>
</feature>